<name>YQCD_BACSU</name>
<reference key="1">
    <citation type="journal article" date="1995" name="Microbiology">
        <title>Complete nucleotide sequence of a skin element excised by DNA rearrangement during sporulation in Bacillus subtilis.</title>
        <authorList>
            <person name="Takemaru K."/>
            <person name="Mizuno M."/>
            <person name="Sato T."/>
            <person name="Takeuchi M."/>
            <person name="Kobayashi Y."/>
        </authorList>
    </citation>
    <scope>NUCLEOTIDE SEQUENCE [GENOMIC DNA]</scope>
    <source>
        <strain>168 / JH642</strain>
    </source>
</reference>
<reference key="2">
    <citation type="journal article" date="1996" name="Microbiology">
        <title>Systematic sequencing of the 283 kb 210 degrees-232 degrees region of the Bacillus subtilis genome containing the skin element and many sporulation genes.</title>
        <authorList>
            <person name="Mizuno M."/>
            <person name="Masuda S."/>
            <person name="Takemaru K."/>
            <person name="Hosono S."/>
            <person name="Sato T."/>
            <person name="Takeuchi M."/>
            <person name="Kobayashi Y."/>
        </authorList>
    </citation>
    <scope>NUCLEOTIDE SEQUENCE [GENOMIC DNA]</scope>
    <source>
        <strain>168 / JH642</strain>
    </source>
</reference>
<reference key="3">
    <citation type="journal article" date="1997" name="Nature">
        <title>The complete genome sequence of the Gram-positive bacterium Bacillus subtilis.</title>
        <authorList>
            <person name="Kunst F."/>
            <person name="Ogasawara N."/>
            <person name="Moszer I."/>
            <person name="Albertini A.M."/>
            <person name="Alloni G."/>
            <person name="Azevedo V."/>
            <person name="Bertero M.G."/>
            <person name="Bessieres P."/>
            <person name="Bolotin A."/>
            <person name="Borchert S."/>
            <person name="Borriss R."/>
            <person name="Boursier L."/>
            <person name="Brans A."/>
            <person name="Braun M."/>
            <person name="Brignell S.C."/>
            <person name="Bron S."/>
            <person name="Brouillet S."/>
            <person name="Bruschi C.V."/>
            <person name="Caldwell B."/>
            <person name="Capuano V."/>
            <person name="Carter N.M."/>
            <person name="Choi S.-K."/>
            <person name="Codani J.-J."/>
            <person name="Connerton I.F."/>
            <person name="Cummings N.J."/>
            <person name="Daniel R.A."/>
            <person name="Denizot F."/>
            <person name="Devine K.M."/>
            <person name="Duesterhoeft A."/>
            <person name="Ehrlich S.D."/>
            <person name="Emmerson P.T."/>
            <person name="Entian K.-D."/>
            <person name="Errington J."/>
            <person name="Fabret C."/>
            <person name="Ferrari E."/>
            <person name="Foulger D."/>
            <person name="Fritz C."/>
            <person name="Fujita M."/>
            <person name="Fujita Y."/>
            <person name="Fuma S."/>
            <person name="Galizzi A."/>
            <person name="Galleron N."/>
            <person name="Ghim S.-Y."/>
            <person name="Glaser P."/>
            <person name="Goffeau A."/>
            <person name="Golightly E.J."/>
            <person name="Grandi G."/>
            <person name="Guiseppi G."/>
            <person name="Guy B.J."/>
            <person name="Haga K."/>
            <person name="Haiech J."/>
            <person name="Harwood C.R."/>
            <person name="Henaut A."/>
            <person name="Hilbert H."/>
            <person name="Holsappel S."/>
            <person name="Hosono S."/>
            <person name="Hullo M.-F."/>
            <person name="Itaya M."/>
            <person name="Jones L.-M."/>
            <person name="Joris B."/>
            <person name="Karamata D."/>
            <person name="Kasahara Y."/>
            <person name="Klaerr-Blanchard M."/>
            <person name="Klein C."/>
            <person name="Kobayashi Y."/>
            <person name="Koetter P."/>
            <person name="Koningstein G."/>
            <person name="Krogh S."/>
            <person name="Kumano M."/>
            <person name="Kurita K."/>
            <person name="Lapidus A."/>
            <person name="Lardinois S."/>
            <person name="Lauber J."/>
            <person name="Lazarevic V."/>
            <person name="Lee S.-M."/>
            <person name="Levine A."/>
            <person name="Liu H."/>
            <person name="Masuda S."/>
            <person name="Mauel C."/>
            <person name="Medigue C."/>
            <person name="Medina N."/>
            <person name="Mellado R.P."/>
            <person name="Mizuno M."/>
            <person name="Moestl D."/>
            <person name="Nakai S."/>
            <person name="Noback M."/>
            <person name="Noone D."/>
            <person name="O'Reilly M."/>
            <person name="Ogawa K."/>
            <person name="Ogiwara A."/>
            <person name="Oudega B."/>
            <person name="Park S.-H."/>
            <person name="Parro V."/>
            <person name="Pohl T.M."/>
            <person name="Portetelle D."/>
            <person name="Porwollik S."/>
            <person name="Prescott A.M."/>
            <person name="Presecan E."/>
            <person name="Pujic P."/>
            <person name="Purnelle B."/>
            <person name="Rapoport G."/>
            <person name="Rey M."/>
            <person name="Reynolds S."/>
            <person name="Rieger M."/>
            <person name="Rivolta C."/>
            <person name="Rocha E."/>
            <person name="Roche B."/>
            <person name="Rose M."/>
            <person name="Sadaie Y."/>
            <person name="Sato T."/>
            <person name="Scanlan E."/>
            <person name="Schleich S."/>
            <person name="Schroeter R."/>
            <person name="Scoffone F."/>
            <person name="Sekiguchi J."/>
            <person name="Sekowska A."/>
            <person name="Seror S.J."/>
            <person name="Serror P."/>
            <person name="Shin B.-S."/>
            <person name="Soldo B."/>
            <person name="Sorokin A."/>
            <person name="Tacconi E."/>
            <person name="Takagi T."/>
            <person name="Takahashi H."/>
            <person name="Takemaru K."/>
            <person name="Takeuchi M."/>
            <person name="Tamakoshi A."/>
            <person name="Tanaka T."/>
            <person name="Terpstra P."/>
            <person name="Tognoni A."/>
            <person name="Tosato V."/>
            <person name="Uchiyama S."/>
            <person name="Vandenbol M."/>
            <person name="Vannier F."/>
            <person name="Vassarotti A."/>
            <person name="Viari A."/>
            <person name="Wambutt R."/>
            <person name="Wedler E."/>
            <person name="Wedler H."/>
            <person name="Weitzenegger T."/>
            <person name="Winters P."/>
            <person name="Wipat A."/>
            <person name="Yamamoto H."/>
            <person name="Yamane K."/>
            <person name="Yasumoto K."/>
            <person name="Yata K."/>
            <person name="Yoshida K."/>
            <person name="Yoshikawa H.-F."/>
            <person name="Zumstein E."/>
            <person name="Yoshikawa H."/>
            <person name="Danchin A."/>
        </authorList>
    </citation>
    <scope>NUCLEOTIDE SEQUENCE [LARGE SCALE GENOMIC DNA]</scope>
    <source>
        <strain>168</strain>
    </source>
</reference>
<reference key="4">
    <citation type="journal article" date="1995" name="Gene">
        <title>Analysis of a Bacillus subtilis genome fragment using a co-operative computer system prototype.</title>
        <authorList>
            <person name="Medigue C."/>
            <person name="Moszer I."/>
            <person name="Viari A."/>
            <person name="Danchin A."/>
        </authorList>
    </citation>
    <scope>IDENTIFICATION</scope>
</reference>
<accession>P45939</accession>
<dbReference type="EMBL" id="D32216">
    <property type="protein sequence ID" value="BAA06956.1"/>
    <property type="molecule type" value="Genomic_DNA"/>
</dbReference>
<dbReference type="EMBL" id="D84432">
    <property type="protein sequence ID" value="BAA12420.1"/>
    <property type="molecule type" value="Genomic_DNA"/>
</dbReference>
<dbReference type="EMBL" id="AL009126">
    <property type="protein sequence ID" value="CAB14535.1"/>
    <property type="molecule type" value="Genomic_DNA"/>
</dbReference>
<dbReference type="PIR" id="C69949">
    <property type="entry name" value="C69949"/>
</dbReference>
<dbReference type="RefSeq" id="NP_390471.1">
    <property type="nucleotide sequence ID" value="NC_000964.3"/>
</dbReference>
<dbReference type="RefSeq" id="WP_009967793.1">
    <property type="nucleotide sequence ID" value="NZ_OZ025638.1"/>
</dbReference>
<dbReference type="SMR" id="P45939"/>
<dbReference type="FunCoup" id="P45939">
    <property type="interactions" value="172"/>
</dbReference>
<dbReference type="STRING" id="224308.BSU25940"/>
<dbReference type="PaxDb" id="224308-BSU25940"/>
<dbReference type="EnsemblBacteria" id="CAB14535">
    <property type="protein sequence ID" value="CAB14535"/>
    <property type="gene ID" value="BSU_25940"/>
</dbReference>
<dbReference type="GeneID" id="937768"/>
<dbReference type="KEGG" id="bsu:BSU25940"/>
<dbReference type="PATRIC" id="fig|224308.179.peg.2819"/>
<dbReference type="eggNOG" id="ENOG5032KD7">
    <property type="taxonomic scope" value="Bacteria"/>
</dbReference>
<dbReference type="InParanoid" id="P45939"/>
<dbReference type="OrthoDB" id="2918946at2"/>
<dbReference type="BioCyc" id="BSUB:BSU25940-MONOMER"/>
<dbReference type="Proteomes" id="UP000001570">
    <property type="component" value="Chromosome"/>
</dbReference>
<dbReference type="Gene3D" id="3.30.56.60">
    <property type="entry name" value="XkdW-like"/>
    <property type="match status" value="1"/>
</dbReference>
<dbReference type="InterPro" id="IPR019094">
    <property type="entry name" value="Phage_SP-beta_YorD"/>
</dbReference>
<dbReference type="InterPro" id="IPR035950">
    <property type="entry name" value="XkdW-like_sf"/>
</dbReference>
<dbReference type="Pfam" id="PF09636">
    <property type="entry name" value="XkdW"/>
    <property type="match status" value="1"/>
</dbReference>
<dbReference type="SUPFAM" id="SSF159865">
    <property type="entry name" value="XkdW-like"/>
    <property type="match status" value="1"/>
</dbReference>
<sequence length="111" mass="12444">MNIGEAILFKYPTADPTKDFIVQNNGDGTPSYIAEWNIRAPIPTEAELKTWWEELQSTSAYEPPVQVDLLARELSQEKLARKQLEELNQTLGSELSKIKLQLLTLQGGQGS</sequence>
<protein>
    <recommendedName>
        <fullName>Uncharacterized protein YqcD</fullName>
    </recommendedName>
</protein>
<evidence type="ECO:0000305" key="1"/>
<organism>
    <name type="scientific">Bacillus subtilis (strain 168)</name>
    <dbReference type="NCBI Taxonomy" id="224308"/>
    <lineage>
        <taxon>Bacteria</taxon>
        <taxon>Bacillati</taxon>
        <taxon>Bacillota</taxon>
        <taxon>Bacilli</taxon>
        <taxon>Bacillales</taxon>
        <taxon>Bacillaceae</taxon>
        <taxon>Bacillus</taxon>
    </lineage>
</organism>
<feature type="chain" id="PRO_0000049774" description="Uncharacterized protein YqcD">
    <location>
        <begin position="1"/>
        <end position="111"/>
    </location>
</feature>
<proteinExistence type="predicted"/>
<gene>
    <name type="primary">yqcD</name>
    <name type="ordered locus">BSU25940</name>
</gene>
<comment type="similarity">
    <text evidence="1">To B.subtilis XkdW.</text>
</comment>
<keyword id="KW-1185">Reference proteome</keyword>